<sequence length="2320" mass="262936">MAEPSSARRPVPLIESELYFLIARYLSAGPCRRAAQVLVQELEQYQLLPKRLDWEGNEHNRSYEELVLSNKHVAPDHLLQICQRIGPMLDKEIPPSISRVTSLLGAGRQSLLRTAKDCRHTVWKGSAFAALHRGRPPEMPVNYGSPPNLVEIHRGKQLTGCSTFSTAFPGTMYQHIKMHRRILGHLSAVYCVAFDRTGHRIFTGSDDCLVKIWSTHNGRLLSTLRGHSAEISDMAVNYENTMIAAGSCDKIIRVWCLRTCAPVAVLQGHTGSITSLQFSPMAKGSQRYMVSTGADGTVCFWQWDLESLKFSPRPLKFTEKPRPGVQMLCSSFSVGGMFLATGSTDHVIRMYFLGFEAPEKIAELESHTDKVDSIQFCNNGDRFLSGSRDGTARIWRFEQLEWRSILLDMATRISGDLSSEEERFMKPKVTMIAWNQNDSIVVTAVNDHVLKVWNSYTGQLLHNLMGHADEVFVLETHPFDSRIMLSAGHDGSIFIWDITKGTKMKHYFNMIEGQGHGAVFDCKFSQDGQHFACTDSHGHLLIFGFGCSKPYEKIPDQMFFHTDYRPLIRDSNNYVLDEQTQQAPHLMPPPFLVDVDGNPHPTKYQRLVPGRENSADEHLIPQLGYVATSDGEVIEQIISLQTNDNDERSPESSILDGMIRQLQQQQDQRMGADQDTIPRGLSNGEETPRRGFRRLSLDIQSPPNIGLRRSGQVEGVRQMHQNAPRSQIATERDLQAWKRRVVVPEVPLGIFRKLEDFRLEKGEEERNLYIIGRKRKTLQLSHKSDSVVLVSQSRQRTCRRKYPNYGRRNRSWRELSSGNESSSSVRHETSCDQSEGSGSSEEDEWRSDRKSESYSESSSDSSSRYSDWTADAGINLQPPLRTSCRRRITRFCSSSEDEISTENLSPPKRRRKRKKENKPKKENLRRMTPAELANMEHLYEFHPPVWITDTTLRKSPFVPQMGDEVIYFRQGHEAYIEAVRRNNIYELNPNKEPWRKMDLRDQELVKIVGIRYEVGPPTLCCLKLAFIDPATGKLMDKSFSIRYHDMPDVIDFLVLRQFYDEARQRNWQSCDRFRSIIDDAWWFGTVLSQEPYQPQYPDSHFQCYIVRWDNTEIEKLSPWDMEPIPDNVDPPEELGASISVTTDELEKLLYKPQAGEWGQKSRDEECDRIISGIDQLLNLDIAAAFAGPVDLCTYPKYCTVVAYPTDLYTIRMRLVNRFYRRLSALVWEVRYIEHNARTFNEPESVIARSAKKITDQLLKFIKNQHCTNISELSNTSENDEQNAEDLDDSDLPKTSSGRRRVHDGKKSIRATNYVESNWKKQCKELVNLIFQCEDSEPFRQPVDLVEYPDYRDIIDTPMDFGTVRETLDAGNYDSPLEFCKDIRLIFSNAKAYTPNKRSKIYSMTLRLSALFEEKMKKISSDFKIGQKFNEKLRRSQRFKQRQNCKGDSQPNKSIRNLKPKRLKSQTKIIPELVGSPTQSTSSRTAYLGTHKTSAGISSGVTSGDSSDSAESSERRKRNRPITNGSTLSESEVEDSLATSLSSSASSSSEESKESSRARESSSRSGLSRSSNLRVTRTRAAQRKTGPVSLANGCGRKATRKRVYLSDSDNNSLETGEILKARAGNNRKVLRKCAAVAANKIKLMSDVEENSSSESVCSGRKLPHRNASAVARKKLLHNSEDEQSLKSEIEEEELKDENQLLPVSSSHTAQSNVDESENRDSESESDLRVARKNWHANGYKSHTPAPSKTKFLKIESSEEDSKSHDSDHACNRTAGPSTSVQKLKAESISEEADSEPGRSGGRKYNTFHKNASFFKKTKILSDSEDSESEEQDREDGKCHKMEMNPISGNLNCDPIAMSQCSSDHGCETDLDSDDDKIEKPNNFMKDSASQDNGLSRKISRKRVCSSDSDSSLQVVKKSSKARTGLLRITRRCAATAANKIKLMSDVEDVSLENVHTRSKNGRKKPLHLACTTAKKKLSDCEGSVHCEVPSEQYACEGKPPDPDSEGSTKVLSQALNGDSDSEDMLNSEHKHRHTNIHKIDAPSKRKSSSVTSSGEDSKSHIPGSETDRTFSSESTLAQKATAENNFEVELNYGLRRWNGRRLRTYGKAPFSKTKVIHDSQETAEKEVKRKRSHPELENVKISETTGNSKFRPDTSSKSSDLGSVTESDIDCTDNTKTKRRKTKGKAKVVRKEFVPRDREPNTKVRTCMHNQKDAVQMPSETLKAKMVPEKVPRRCATVAANKIKIMSNLKETISGPENVWIRKSSRKLPHRNASAAAKKKLLNVYKEDDTTINSESEKELEDINRKMLFLRGFRSWKENAQ</sequence>
<feature type="chain" id="PRO_0000050888" description="Bromodomain and WD repeat-containing protein 1">
    <location>
        <begin position="1"/>
        <end position="2320"/>
    </location>
</feature>
<feature type="repeat" description="WD 1">
    <location>
        <begin position="184"/>
        <end position="223"/>
    </location>
</feature>
<feature type="repeat" description="WD 2">
    <location>
        <begin position="226"/>
        <end position="265"/>
    </location>
</feature>
<feature type="repeat" description="WD 3">
    <location>
        <begin position="268"/>
        <end position="311"/>
    </location>
</feature>
<feature type="repeat" description="WD 4">
    <location>
        <begin position="322"/>
        <end position="365"/>
    </location>
</feature>
<feature type="repeat" description="WD 5">
    <location>
        <begin position="366"/>
        <end position="405"/>
    </location>
</feature>
<feature type="repeat" description="WD 6">
    <location>
        <begin position="424"/>
        <end position="463"/>
    </location>
</feature>
<feature type="repeat" description="WD 7">
    <location>
        <begin position="466"/>
        <end position="506"/>
    </location>
</feature>
<feature type="repeat" description="WD 8">
    <location>
        <begin position="514"/>
        <end position="553"/>
    </location>
</feature>
<feature type="domain" description="Bromo 1" evidence="3">
    <location>
        <begin position="1157"/>
        <end position="1264"/>
    </location>
</feature>
<feature type="domain" description="Bromo 2" evidence="3">
    <location>
        <begin position="1313"/>
        <end position="1418"/>
    </location>
</feature>
<feature type="region of interest" description="Disordered" evidence="4">
    <location>
        <begin position="668"/>
        <end position="691"/>
    </location>
</feature>
<feature type="region of interest" description="Disordered" evidence="4">
    <location>
        <begin position="809"/>
        <end position="867"/>
    </location>
</feature>
<feature type="region of interest" description="Disordered" evidence="4">
    <location>
        <begin position="895"/>
        <end position="925"/>
    </location>
</feature>
<feature type="region of interest" description="Disordered" evidence="4">
    <location>
        <begin position="1271"/>
        <end position="1304"/>
    </location>
</feature>
<feature type="region of interest" description="Disordered" evidence="4">
    <location>
        <begin position="1434"/>
        <end position="1593"/>
    </location>
</feature>
<feature type="region of interest" description="Disordered" evidence="4">
    <location>
        <begin position="1670"/>
        <end position="1805"/>
    </location>
</feature>
<feature type="region of interest" description="Disordered" evidence="4">
    <location>
        <begin position="1817"/>
        <end position="1839"/>
    </location>
</feature>
<feature type="region of interest" description="Disordered" evidence="4">
    <location>
        <begin position="1862"/>
        <end position="1899"/>
    </location>
</feature>
<feature type="region of interest" description="Disordered" evidence="4">
    <location>
        <begin position="2014"/>
        <end position="2077"/>
    </location>
</feature>
<feature type="region of interest" description="Disordered" evidence="4">
    <location>
        <begin position="2112"/>
        <end position="2184"/>
    </location>
</feature>
<feature type="compositionally biased region" description="Low complexity" evidence="4">
    <location>
        <begin position="814"/>
        <end position="824"/>
    </location>
</feature>
<feature type="compositionally biased region" description="Low complexity" evidence="4">
    <location>
        <begin position="854"/>
        <end position="867"/>
    </location>
</feature>
<feature type="compositionally biased region" description="Basic residues" evidence="4">
    <location>
        <begin position="907"/>
        <end position="918"/>
    </location>
</feature>
<feature type="compositionally biased region" description="Acidic residues" evidence="4">
    <location>
        <begin position="1277"/>
        <end position="1289"/>
    </location>
</feature>
<feature type="compositionally biased region" description="Polar residues" evidence="4">
    <location>
        <begin position="1443"/>
        <end position="1454"/>
    </location>
</feature>
<feature type="compositionally biased region" description="Basic residues" evidence="4">
    <location>
        <begin position="1455"/>
        <end position="1464"/>
    </location>
</feature>
<feature type="compositionally biased region" description="Polar residues" evidence="4">
    <location>
        <begin position="1475"/>
        <end position="1496"/>
    </location>
</feature>
<feature type="compositionally biased region" description="Low complexity" evidence="4">
    <location>
        <begin position="1497"/>
        <end position="1509"/>
    </location>
</feature>
<feature type="compositionally biased region" description="Polar residues" evidence="4">
    <location>
        <begin position="1520"/>
        <end position="1529"/>
    </location>
</feature>
<feature type="compositionally biased region" description="Low complexity" evidence="4">
    <location>
        <begin position="1535"/>
        <end position="1548"/>
    </location>
</feature>
<feature type="compositionally biased region" description="Basic and acidic residues" evidence="4">
    <location>
        <begin position="1549"/>
        <end position="1561"/>
    </location>
</feature>
<feature type="compositionally biased region" description="Basic and acidic residues" evidence="4">
    <location>
        <begin position="1676"/>
        <end position="1687"/>
    </location>
</feature>
<feature type="compositionally biased region" description="Polar residues" evidence="4">
    <location>
        <begin position="1701"/>
        <end position="1712"/>
    </location>
</feature>
<feature type="compositionally biased region" description="Basic and acidic residues" evidence="4">
    <location>
        <begin position="1715"/>
        <end position="1728"/>
    </location>
</feature>
<feature type="compositionally biased region" description="Basic and acidic residues" evidence="4">
    <location>
        <begin position="1751"/>
        <end position="1769"/>
    </location>
</feature>
<feature type="compositionally biased region" description="Acidic residues" evidence="4">
    <location>
        <begin position="1821"/>
        <end position="1832"/>
    </location>
</feature>
<feature type="compositionally biased region" description="Basic and acidic residues" evidence="4">
    <location>
        <begin position="2054"/>
        <end position="2069"/>
    </location>
</feature>
<feature type="compositionally biased region" description="Basic and acidic residues" evidence="4">
    <location>
        <begin position="2114"/>
        <end position="2139"/>
    </location>
</feature>
<feature type="compositionally biased region" description="Polar residues" evidence="4">
    <location>
        <begin position="2140"/>
        <end position="2165"/>
    </location>
</feature>
<feature type="modified residue" description="Phosphothreonine" evidence="2">
    <location>
        <position position="687"/>
    </location>
</feature>
<feature type="modified residue" description="Phosphoserine" evidence="21 22 23">
    <location>
        <position position="696"/>
    </location>
</feature>
<feature type="modified residue" description="Phosphoserine" evidence="22">
    <location>
        <position position="701"/>
    </location>
</feature>
<feature type="modified residue" description="Phosphoserine" evidence="21">
    <location>
        <position position="710"/>
    </location>
</feature>
<feature type="modified residue" description="Phosphoserine" evidence="19">
    <location>
        <position position="1289"/>
    </location>
</feature>
<feature type="modified residue" description="Phosphoserine" evidence="20 23">
    <location>
        <position position="1475"/>
    </location>
</feature>
<feature type="modified residue" description="Phosphothreonine" evidence="21 22">
    <location>
        <position position="1477"/>
    </location>
</feature>
<feature type="modified residue" description="Phosphoserine" evidence="21">
    <location>
        <position position="1479"/>
    </location>
</feature>
<feature type="modified residue" description="Phosphoserine" evidence="19 20 21">
    <location>
        <position position="1605"/>
    </location>
</feature>
<feature type="modified residue" description="Phosphoserine" evidence="19 20 21">
    <location>
        <position position="1607"/>
    </location>
</feature>
<feature type="modified residue" description="Phosphoserine" evidence="22">
    <location>
        <position position="1678"/>
    </location>
</feature>
<feature type="modified residue" description="Phosphoserine" evidence="22">
    <location>
        <position position="1683"/>
    </location>
</feature>
<feature type="modified residue" description="Phosphoserine" evidence="21 22">
    <location>
        <position position="1686"/>
    </location>
</feature>
<feature type="modified residue" description="Phosphoserine" evidence="2">
    <location>
        <position position="1755"/>
    </location>
</feature>
<feature type="modified residue" description="Phosphoserine" evidence="2">
    <location>
        <position position="1756"/>
    </location>
</feature>
<feature type="modified residue" description="Phosphoserine" evidence="2">
    <location>
        <position position="1786"/>
    </location>
</feature>
<feature type="modified residue" description="Phosphoserine" evidence="2">
    <location>
        <position position="1788"/>
    </location>
</feature>
<feature type="modified residue" description="Phosphoserine" evidence="2">
    <location>
        <position position="1793"/>
    </location>
</feature>
<feature type="modified residue" description="Phosphoserine" evidence="2">
    <location>
        <position position="1820"/>
    </location>
</feature>
<feature type="modified residue" description="Phosphothreonine" evidence="2">
    <location>
        <position position="1867"/>
    </location>
</feature>
<feature type="modified residue" description="Phosphoserine" evidence="2">
    <location>
        <position position="1871"/>
    </location>
</feature>
<feature type="modified residue" description="Phosphoserine" evidence="19">
    <location>
        <position position="1904"/>
    </location>
</feature>
<feature type="modified residue" description="Phosphoserine" evidence="19">
    <location>
        <position position="1905"/>
    </location>
</feature>
<feature type="modified residue" description="Phosphoserine" evidence="19">
    <location>
        <position position="1907"/>
    </location>
</feature>
<feature type="modified residue" description="Phosphoserine" evidence="19">
    <location>
        <position position="1910"/>
    </location>
</feature>
<feature type="modified residue" description="Phosphoserine" evidence="23">
    <location>
        <position position="1943"/>
    </location>
</feature>
<feature type="modified residue" description="Phosphothreonine" evidence="2">
    <location>
        <position position="1955"/>
    </location>
</feature>
<feature type="modified residue" description="Phosphoserine" evidence="19 20 21 22">
    <location>
        <position position="2018"/>
    </location>
</feature>
<feature type="modified residue" description="Phosphoserine" evidence="19 20 21 22">
    <location>
        <position position="2020"/>
    </location>
</feature>
<feature type="modified residue" description="Phosphoserine" evidence="2">
    <location>
        <position position="2052"/>
    </location>
</feature>
<feature type="modified residue" description="Phosphothreonine" evidence="2">
    <location>
        <position position="2164"/>
    </location>
</feature>
<feature type="modified residue" description="Phosphoserine" evidence="2">
    <location>
        <position position="2166"/>
    </location>
</feature>
<feature type="splice variant" id="VSP_044245" description="In isoform D." evidence="15">
    <original>DCRH</original>
    <variation>GTLI</variation>
    <location>
        <begin position="117"/>
        <end position="120"/>
    </location>
</feature>
<feature type="splice variant" id="VSP_044246" description="In isoform D." evidence="15">
    <location>
        <begin position="121"/>
        <end position="2320"/>
    </location>
</feature>
<feature type="splice variant" id="VSP_018526" description="In isoform B." evidence="13 14 16 17">
    <original>EFVPRDREPNTKVRTCMHNQKDAVQMPSETLKAKMVPEKVPRRCATVAANKIKIMSNLKETISGPENVWIRKSSRKLPHRNASAAAKKKLLNVYKEDDTTINSESEKELEDINRKMLFLRGFRSWKENAQ</original>
    <variation>GKTFTANISKTVRRQRQSKRPRLSVDDNDWEDLDYAKSKRVLRRSKIKTRNQGRRTVRYHDGDDDRSLENVLDFNGCTL</variation>
    <location>
        <begin position="2191"/>
        <end position="2320"/>
    </location>
</feature>
<feature type="splice variant" id="VSP_018527" description="In isoform C." evidence="17">
    <original>EFVPRDREPNTKVRTCMHNQKDAVQMPSETLKAKMVPEKVPRRCATVAANKIKIMSNLKETISGPENVWIRKSSRKLPHRNASAAAKKKLLNVYK</original>
    <variation>DKTFSPVYL</variation>
    <location>
        <begin position="2191"/>
        <end position="2285"/>
    </location>
</feature>
<feature type="splice variant" id="VSP_018528" description="In isoform C." evidence="17">
    <location>
        <begin position="2286"/>
        <end position="2320"/>
    </location>
</feature>
<feature type="sequence variant" id="VAR_088721" description="In CILD51; uncertain significance; dbSNP:rs2146817189." evidence="9">
    <original>G</original>
    <variation>S</variation>
    <location>
        <position position="56"/>
    </location>
</feature>
<feature type="sequence variant" id="VAR_026435" description="In dbSNP:rs2056844." evidence="12">
    <original>Q</original>
    <variation>E</variation>
    <location>
        <position position="83"/>
    </location>
</feature>
<feature type="sequence variant" id="VAR_088722" description="In CILD51; uncertain significance; loss of expression in sperm flagella of a homozygous patient; dbSNP:rs1472467905." evidence="9">
    <original>H</original>
    <variation>Y</variation>
    <location>
        <position position="175"/>
    </location>
</feature>
<feature type="sequence variant" id="VAR_088723" description="In CILD51; uncertain significance; dbSNP:rs2146693248." evidence="9">
    <original>L</original>
    <variation>S</variation>
    <location>
        <position position="339"/>
    </location>
</feature>
<feature type="sequence variant" id="VAR_026436" description="In dbSNP:rs2183573." evidence="11">
    <original>S</original>
    <variation>P</variation>
    <location>
        <position position="1511"/>
    </location>
</feature>
<feature type="sequence variant" id="VAR_026437" description="In dbSNP:rs1041439." evidence="5 6 10 11 12">
    <original>L</original>
    <variation>P</variation>
    <location>
        <position position="1699"/>
    </location>
</feature>
<feature type="sequence variant" id="VAR_088724" description="In CILD51; uncertain significance; loss of expression in sperm flagella of a homozygous patient; dbSNP:rs147211854." evidence="9">
    <original>Q</original>
    <variation>L</variation>
    <location>
        <position position="1858"/>
    </location>
</feature>
<feature type="sequence variant" id="VAR_057584" description="In dbSNP:rs2234548.">
    <original>K</original>
    <variation>R</variation>
    <location>
        <position position="2156"/>
    </location>
</feature>
<feature type="sequence conflict" description="In Ref. 6; CAA10896." evidence="18" ref="6">
    <original>SSS</original>
    <variation>GTR</variation>
    <location>
        <begin position="1560"/>
        <end position="1562"/>
    </location>
</feature>
<feature type="sequence conflict" description="In Ref. 7; AK002177." evidence="18" ref="7">
    <original>M</original>
    <variation>V</variation>
    <location>
        <position position="1840"/>
    </location>
</feature>
<feature type="sequence conflict" description="In Ref. 7; AK002177." evidence="18" ref="7">
    <original>E</original>
    <variation>G</variation>
    <location>
        <position position="2134"/>
    </location>
</feature>
<feature type="helix" evidence="24">
    <location>
        <begin position="1318"/>
        <end position="1330"/>
    </location>
</feature>
<feature type="helix" evidence="24">
    <location>
        <begin position="1333"/>
        <end position="1338"/>
    </location>
</feature>
<feature type="turn" evidence="24">
    <location>
        <begin position="1344"/>
        <end position="1346"/>
    </location>
</feature>
<feature type="helix" evidence="24">
    <location>
        <begin position="1350"/>
        <end position="1353"/>
    </location>
</feature>
<feature type="helix" evidence="24">
    <location>
        <begin position="1360"/>
        <end position="1368"/>
    </location>
</feature>
<feature type="helix" evidence="24">
    <location>
        <begin position="1375"/>
        <end position="1392"/>
    </location>
</feature>
<feature type="helix" evidence="24">
    <location>
        <begin position="1399"/>
        <end position="1422"/>
    </location>
</feature>
<feature type="modified residue" description="Phosphoserine" evidence="21">
    <location sequence="Q9NSI6-2">
        <position position="2214"/>
    </location>
</feature>
<accession>Q9NSI6</accession>
<accession>C9JK25</accession>
<accession>O43721</accession>
<accession>Q5R2V0</accession>
<accession>Q5R2V1</accession>
<accession>Q6P2D1</accession>
<accession>Q8TCV3</accession>
<accession>Q96QG9</accession>
<accession>Q96QH0</accession>
<accession>Q9NUK1</accession>
<organism>
    <name type="scientific">Homo sapiens</name>
    <name type="common">Human</name>
    <dbReference type="NCBI Taxonomy" id="9606"/>
    <lineage>
        <taxon>Eukaryota</taxon>
        <taxon>Metazoa</taxon>
        <taxon>Chordata</taxon>
        <taxon>Craniata</taxon>
        <taxon>Vertebrata</taxon>
        <taxon>Euteleostomi</taxon>
        <taxon>Mammalia</taxon>
        <taxon>Eutheria</taxon>
        <taxon>Euarchontoglires</taxon>
        <taxon>Primates</taxon>
        <taxon>Haplorrhini</taxon>
        <taxon>Catarrhini</taxon>
        <taxon>Hominidae</taxon>
        <taxon>Homo</taxon>
    </lineage>
</organism>
<name>BRWD1_HUMAN</name>
<comment type="function">
    <text evidence="1 7">May be a transcriptional activator. May be involved in chromatin remodeling (By similarity). Plays a role in the regulation of cell morphology and cytoskeletal organization. Required in the control of cell shape.</text>
</comment>
<comment type="subunit">
    <text evidence="1">Interacts with SMARCA4.</text>
</comment>
<comment type="interaction">
    <interactant intactId="EBI-10693038">
        <id>Q9NSI6-4</id>
    </interactant>
    <interactant intactId="EBI-491169">
        <id>P07550</id>
        <label>ADRB2</label>
    </interactant>
    <organismsDiffer>false</organismsDiffer>
    <experiments>3</experiments>
</comment>
<comment type="interaction">
    <interactant intactId="EBI-10693038">
        <id>Q9NSI6-4</id>
    </interactant>
    <interactant intactId="EBI-718729">
        <id>P55212</id>
        <label>CASP6</label>
    </interactant>
    <organismsDiffer>false</organismsDiffer>
    <experiments>3</experiments>
</comment>
<comment type="interaction">
    <interactant intactId="EBI-10693038">
        <id>Q9NSI6-4</id>
    </interactant>
    <interactant intactId="EBI-6624398">
        <id>P06307</id>
        <label>CCK</label>
    </interactant>
    <organismsDiffer>false</organismsDiffer>
    <experiments>3</experiments>
</comment>
<comment type="interaction">
    <interactant intactId="EBI-10693038">
        <id>Q9NSI6-4</id>
    </interactant>
    <interactant intactId="EBI-25837549">
        <id>P28329-3</id>
        <label>CHAT</label>
    </interactant>
    <organismsDiffer>false</organismsDiffer>
    <experiments>3</experiments>
</comment>
<comment type="interaction">
    <interactant intactId="EBI-10693038">
        <id>Q9NSI6-4</id>
    </interactant>
    <interactant intactId="EBI-79333">
        <id>P36544</id>
        <label>CHRNA7</label>
    </interactant>
    <organismsDiffer>false</organismsDiffer>
    <experiments>3</experiments>
</comment>
<comment type="interaction">
    <interactant intactId="EBI-10693038">
        <id>Q9NSI6-4</id>
    </interactant>
    <interactant intactId="EBI-446479">
        <id>P99999</id>
        <label>CYCS</label>
    </interactant>
    <organismsDiffer>false</organismsDiffer>
    <experiments>3</experiments>
</comment>
<comment type="interaction">
    <interactant intactId="EBI-10693038">
        <id>Q9NSI6-4</id>
    </interactant>
    <interactant intactId="EBI-348399">
        <id>P22607</id>
        <label>FGFR3</label>
    </interactant>
    <organismsDiffer>false</organismsDiffer>
    <experiments>3</experiments>
</comment>
<comment type="interaction">
    <interactant intactId="EBI-10693038">
        <id>Q9NSI6-4</id>
    </interactant>
    <interactant intactId="EBI-10242151">
        <id>Q53EP0-3</id>
        <label>FNDC3B</label>
    </interactant>
    <organismsDiffer>false</organismsDiffer>
    <experiments>3</experiments>
</comment>
<comment type="interaction">
    <interactant intactId="EBI-10693038">
        <id>Q9NSI6-4</id>
    </interactant>
    <interactant intactId="EBI-8285963">
        <id>Q14957</id>
        <label>GRIN2C</label>
    </interactant>
    <organismsDiffer>false</organismsDiffer>
    <experiments>3</experiments>
</comment>
<comment type="interaction">
    <interactant intactId="EBI-10693038">
        <id>Q9NSI6-4</id>
    </interactant>
    <interactant intactId="EBI-12094670">
        <id>Q8WUI4-6</id>
        <label>HDAC7</label>
    </interactant>
    <organismsDiffer>false</organismsDiffer>
    <experiments>3</experiments>
</comment>
<comment type="interaction">
    <interactant intactId="EBI-10693038">
        <id>Q9NSI6-4</id>
    </interactant>
    <interactant intactId="EBI-473886">
        <id>O00291</id>
        <label>HIP1</label>
    </interactant>
    <organismsDiffer>false</organismsDiffer>
    <experiments>3</experiments>
</comment>
<comment type="interaction">
    <interactant intactId="EBI-10693038">
        <id>Q9NSI6-4</id>
    </interactant>
    <interactant intactId="EBI-712096">
        <id>P30519</id>
        <label>HMOX2</label>
    </interactant>
    <organismsDiffer>false</organismsDiffer>
    <experiments>3</experiments>
</comment>
<comment type="interaction">
    <interactant intactId="EBI-10693038">
        <id>Q9NSI6-4</id>
    </interactant>
    <interactant intactId="EBI-352682">
        <id>P04792</id>
        <label>HSPB1</label>
    </interactant>
    <organismsDiffer>false</organismsDiffer>
    <experiments>3</experiments>
</comment>
<comment type="interaction">
    <interactant intactId="EBI-10693038">
        <id>Q9NSI6-4</id>
    </interactant>
    <interactant intactId="EBI-10975473">
        <id>O60333-2</id>
        <label>KIF1B</label>
    </interactant>
    <organismsDiffer>false</organismsDiffer>
    <experiments>3</experiments>
</comment>
<comment type="interaction">
    <interactant intactId="EBI-10693038">
        <id>Q9NSI6-4</id>
    </interactant>
    <interactant intactId="EBI-21591415">
        <id>P13473-2</id>
        <label>LAMP2</label>
    </interactant>
    <organismsDiffer>false</organismsDiffer>
    <experiments>3</experiments>
</comment>
<comment type="interaction">
    <interactant intactId="EBI-10693038">
        <id>Q9NSI6-4</id>
    </interactant>
    <interactant intactId="EBI-11742836">
        <id>Q16656-4</id>
        <label>NRF1</label>
    </interactant>
    <organismsDiffer>false</organismsDiffer>
    <experiments>3</experiments>
</comment>
<comment type="interaction">
    <interactant intactId="EBI-10693038">
        <id>Q9NSI6-4</id>
    </interactant>
    <interactant intactId="EBI-591778">
        <id>P61970</id>
        <label>NUTF2</label>
    </interactant>
    <organismsDiffer>false</organismsDiffer>
    <experiments>3</experiments>
</comment>
<comment type="interaction">
    <interactant intactId="EBI-10693038">
        <id>Q9NSI6-4</id>
    </interactant>
    <interactant intactId="EBI-748974">
        <id>Q96CV9</id>
        <label>OPTN</label>
    </interactant>
    <organismsDiffer>false</organismsDiffer>
    <experiments>3</experiments>
</comment>
<comment type="interaction">
    <interactant intactId="EBI-10693038">
        <id>Q9NSI6-4</id>
    </interactant>
    <interactant intactId="EBI-286642">
        <id>P62826</id>
        <label>RAN</label>
    </interactant>
    <organismsDiffer>false</organismsDiffer>
    <experiments>3</experiments>
</comment>
<comment type="interaction">
    <interactant intactId="EBI-10693038">
        <id>Q9NSI6-4</id>
    </interactant>
    <interactant intactId="EBI-396669">
        <id>Q9Y3C5</id>
        <label>RNF11</label>
    </interactant>
    <organismsDiffer>false</organismsDiffer>
    <experiments>3</experiments>
</comment>
<comment type="interaction">
    <interactant intactId="EBI-10693038">
        <id>Q9NSI6-4</id>
    </interactant>
    <interactant intactId="EBI-358489">
        <id>Q96GM5</id>
        <label>SMARCD1</label>
    </interactant>
    <organismsDiffer>false</organismsDiffer>
    <experiments>3</experiments>
</comment>
<comment type="interaction">
    <interactant intactId="EBI-10693038">
        <id>Q9NSI6-4</id>
    </interactant>
    <interactant intactId="EBI-2559665">
        <id>Q5JTV8</id>
        <label>TOR1AIP1</label>
    </interactant>
    <organismsDiffer>false</organismsDiffer>
    <experiments>3</experiments>
</comment>
<comment type="interaction">
    <interactant intactId="EBI-10693038">
        <id>Q9NSI6-4</id>
    </interactant>
    <interactant intactId="EBI-741480">
        <id>Q9UMX0</id>
        <label>UBQLN1</label>
    </interactant>
    <organismsDiffer>false</organismsDiffer>
    <experiments>3</experiments>
</comment>
<comment type="interaction">
    <interactant intactId="EBI-10693038">
        <id>Q9NSI6-4</id>
    </interactant>
    <interactant intactId="EBI-720609">
        <id>O76024</id>
        <label>WFS1</label>
    </interactant>
    <organismsDiffer>false</organismsDiffer>
    <experiments>3</experiments>
</comment>
<comment type="interaction">
    <interactant intactId="EBI-10693038">
        <id>Q9NSI6-4</id>
    </interactant>
    <interactant intactId="EBI-25900580">
        <id>Q9Y649</id>
    </interactant>
    <organismsDiffer>false</organismsDiffer>
    <experiments>3</experiments>
</comment>
<comment type="subcellular location">
    <subcellularLocation>
        <location evidence="2">Cytoplasm</location>
    </subcellularLocation>
    <subcellularLocation>
        <location evidence="8">Nucleus</location>
    </subcellularLocation>
    <subcellularLocation>
        <location evidence="9">Cell projection</location>
        <location evidence="9">Cilium membrane</location>
    </subcellularLocation>
    <subcellularLocation>
        <location evidence="9">Cytoplasm</location>
        <location evidence="9">Cytoskeleton</location>
        <location evidence="9">Flagellum axoneme</location>
    </subcellularLocation>
</comment>
<comment type="alternative products">
    <event type="alternative splicing"/>
    <isoform>
        <id>Q9NSI6-1</id>
        <name>A</name>
        <sequence type="displayed"/>
    </isoform>
    <isoform>
        <id>Q9NSI6-2</id>
        <name>B</name>
        <sequence type="described" ref="VSP_018526"/>
    </isoform>
    <isoform>
        <id>Q9NSI6-3</id>
        <name>C</name>
        <sequence type="described" ref="VSP_018527 VSP_018528"/>
    </isoform>
    <isoform>
        <id>Q9NSI6-4</id>
        <name>D</name>
        <sequence type="described" ref="VSP_044245 VSP_044246"/>
    </isoform>
</comment>
<comment type="tissue specificity">
    <text evidence="5 9">Ubiquitously expressed (PubMed:12359327). Expressed in respiratory epithelial cells and testis spermatozoa.</text>
</comment>
<comment type="disease" evidence="9">
    <disease id="DI-06701">
        <name>Ciliary dyskinesia, primary, 51</name>
        <acronym>CILD51</acronym>
        <description>A form of primary ciliary dyskinesia, a disorder characterized by abnormalities of motile cilia. Respiratory infections leading to chronic inflammation and bronchiectasis are recurrent, due to defects in the respiratory cilia. CILD51 is an autosomal recessive form characterized by male infertility due to multiple morphologic abnormalities of the sperm flagella, resulting in severely reduced progressive motility. Affected individuals have recurrent upper and lower respiratory infections, and some exhibit dextrocardia and/or situs inversus.</description>
        <dbReference type="MIM" id="620438"/>
    </disease>
    <text>The disease may be caused by variants affecting the gene represented in this entry.</text>
</comment>
<comment type="sequence caution" evidence="18">
    <conflict type="frameshift">
        <sequence resource="EMBL-CDS" id="CAA10896"/>
    </conflict>
</comment>
<evidence type="ECO:0000250" key="1"/>
<evidence type="ECO:0000250" key="2">
    <source>
        <dbReference type="UniProtKB" id="Q921C3"/>
    </source>
</evidence>
<evidence type="ECO:0000255" key="3">
    <source>
        <dbReference type="PROSITE-ProRule" id="PRU00035"/>
    </source>
</evidence>
<evidence type="ECO:0000256" key="4">
    <source>
        <dbReference type="SAM" id="MobiDB-lite"/>
    </source>
</evidence>
<evidence type="ECO:0000269" key="5">
    <source>
    </source>
</evidence>
<evidence type="ECO:0000269" key="6">
    <source>
    </source>
</evidence>
<evidence type="ECO:0000269" key="7">
    <source>
    </source>
</evidence>
<evidence type="ECO:0000269" key="8">
    <source>
    </source>
</evidence>
<evidence type="ECO:0000269" key="9">
    <source>
    </source>
</evidence>
<evidence type="ECO:0000269" key="10">
    <source>
    </source>
</evidence>
<evidence type="ECO:0000269" key="11">
    <source ref="2"/>
</evidence>
<evidence type="ECO:0000269" key="12">
    <source ref="3"/>
</evidence>
<evidence type="ECO:0000303" key="13">
    <source>
    </source>
</evidence>
<evidence type="ECO:0000303" key="14">
    <source>
    </source>
</evidence>
<evidence type="ECO:0000303" key="15">
    <source>
    </source>
</evidence>
<evidence type="ECO:0000303" key="16">
    <source ref="2"/>
</evidence>
<evidence type="ECO:0000303" key="17">
    <source ref="3"/>
</evidence>
<evidence type="ECO:0000305" key="18"/>
<evidence type="ECO:0007744" key="19">
    <source>
    </source>
</evidence>
<evidence type="ECO:0007744" key="20">
    <source>
    </source>
</evidence>
<evidence type="ECO:0007744" key="21">
    <source>
    </source>
</evidence>
<evidence type="ECO:0007744" key="22">
    <source>
    </source>
</evidence>
<evidence type="ECO:0007744" key="23">
    <source>
    </source>
</evidence>
<evidence type="ECO:0007829" key="24">
    <source>
        <dbReference type="PDB" id="3Q2E"/>
    </source>
</evidence>
<reference key="1">
    <citation type="journal article" date="2002" name="Biochim. Biophys. Acta">
        <title>Characterisation and expression analysis of the WDR9 gene, located in the Down critical region-2 of the human chromosome 21.</title>
        <authorList>
            <person name="Ramos V.C."/>
            <person name="Vidal-Taboada J.M."/>
            <person name="Bergonon S."/>
            <person name="Egeo A."/>
            <person name="Fisher E.M.C."/>
            <person name="Scartezzini P."/>
            <person name="Oliva R."/>
        </authorList>
    </citation>
    <scope>NUCLEOTIDE SEQUENCE [MRNA] (ISOFORM B)</scope>
    <scope>TISSUE SPECIFICITY</scope>
    <scope>VARIANT PRO-1699</scope>
</reference>
<reference key="2">
    <citation type="submission" date="2000-07" db="EMBL/GenBank/DDBJ databases">
        <title>Isolation and characterization of a new chromosome 21 gene, WDR9, with different alternatively spliced transcripts and different protein forms.</title>
        <authorList>
            <person name="Scott H.S."/>
            <person name="Barras C."/>
            <person name="Mittaz L."/>
            <person name="Michaud J."/>
            <person name="Guidi S."/>
            <person name="Scamuffa N."/>
            <person name="Antonarakis S."/>
        </authorList>
    </citation>
    <scope>NUCLEOTIDE SEQUENCE [MRNA] (ISOFORMS A AND B)</scope>
    <scope>VARIANTS PRO-1511 AND PRO-1699</scope>
</reference>
<reference key="3">
    <citation type="submission" date="2002-02" db="EMBL/GenBank/DDBJ databases">
        <title>Isolation of WDR9 cDNA on human chromosome 21q22.3.</title>
        <authorList>
            <person name="Obayashi I."/>
            <person name="Shibuya K."/>
            <person name="Minoshima S."/>
            <person name="Kudoh J."/>
            <person name="Shimizu N."/>
        </authorList>
    </citation>
    <scope>NUCLEOTIDE SEQUENCE [MRNA] (ISOFORMS B AND C)</scope>
    <scope>VARIANTS GLU-83 AND PRO-1699</scope>
    <source>
        <tissue>Pancreas</tissue>
    </source>
</reference>
<reference key="4">
    <citation type="journal article" date="2000" name="Nature">
        <title>The DNA sequence of human chromosome 21.</title>
        <authorList>
            <person name="Hattori M."/>
            <person name="Fujiyama A."/>
            <person name="Taylor T.D."/>
            <person name="Watanabe H."/>
            <person name="Yada T."/>
            <person name="Park H.-S."/>
            <person name="Toyoda A."/>
            <person name="Ishii K."/>
            <person name="Totoki Y."/>
            <person name="Choi D.-K."/>
            <person name="Groner Y."/>
            <person name="Soeda E."/>
            <person name="Ohki M."/>
            <person name="Takagi T."/>
            <person name="Sakaki Y."/>
            <person name="Taudien S."/>
            <person name="Blechschmidt K."/>
            <person name="Polley A."/>
            <person name="Menzel U."/>
            <person name="Delabar J."/>
            <person name="Kumpf K."/>
            <person name="Lehmann R."/>
            <person name="Patterson D."/>
            <person name="Reichwald K."/>
            <person name="Rump A."/>
            <person name="Schillhabel M."/>
            <person name="Schudy A."/>
            <person name="Zimmermann W."/>
            <person name="Rosenthal A."/>
            <person name="Kudoh J."/>
            <person name="Shibuya K."/>
            <person name="Kawasaki K."/>
            <person name="Asakawa S."/>
            <person name="Shintani A."/>
            <person name="Sasaki T."/>
            <person name="Nagamine K."/>
            <person name="Mitsuyama S."/>
            <person name="Antonarakis S.E."/>
            <person name="Minoshima S."/>
            <person name="Shimizu N."/>
            <person name="Nordsiek G."/>
            <person name="Hornischer K."/>
            <person name="Brandt P."/>
            <person name="Scharfe M."/>
            <person name="Schoen O."/>
            <person name="Desario A."/>
            <person name="Reichelt J."/>
            <person name="Kauer G."/>
            <person name="Bloecker H."/>
            <person name="Ramser J."/>
            <person name="Beck A."/>
            <person name="Klages S."/>
            <person name="Hennig S."/>
            <person name="Riesselmann L."/>
            <person name="Dagand E."/>
            <person name="Wehrmeyer S."/>
            <person name="Borzym K."/>
            <person name="Gardiner K."/>
            <person name="Nizetic D."/>
            <person name="Francis F."/>
            <person name="Lehrach H."/>
            <person name="Reinhardt R."/>
            <person name="Yaspo M.-L."/>
        </authorList>
    </citation>
    <scope>NUCLEOTIDE SEQUENCE [LARGE SCALE GENOMIC DNA]</scope>
</reference>
<reference key="5">
    <citation type="journal article" date="2004" name="Genome Res.">
        <title>The status, quality, and expansion of the NIH full-length cDNA project: the Mammalian Gene Collection (MGC).</title>
        <authorList>
            <consortium name="The MGC Project Team"/>
        </authorList>
    </citation>
    <scope>NUCLEOTIDE SEQUENCE [LARGE SCALE MRNA] (ISOFORM D)</scope>
    <source>
        <tissue>Uterus</tissue>
    </source>
</reference>
<reference key="6">
    <citation type="journal article" date="1998" name="Biochem. Biophys. Res. Commun.">
        <title>High resolution physical mapping and identification of transcribed sequences in the Down syndrome region-2.</title>
        <authorList>
            <person name="Vidal-Taboada J.M."/>
            <person name="Bergonon S."/>
            <person name="Sanchez M."/>
            <person name="Lopez-Acedo C."/>
            <person name="Groet J."/>
            <person name="Nizetic D."/>
            <person name="Egeo A."/>
            <person name="Scartezzini P."/>
            <person name="Katsanis N."/>
            <person name="Fisher E.M.C."/>
            <person name="Delabar J.-M."/>
            <person name="Oliva R."/>
        </authorList>
    </citation>
    <scope>NUCLEOTIDE SEQUENCE [MRNA] OF 1560-1779</scope>
    <scope>VARIANT PRO-1699</scope>
    <source>
        <tissue>Fetal heart</tissue>
    </source>
</reference>
<reference key="7">
    <citation type="journal article" date="2004" name="Nat. Genet.">
        <title>Complete sequencing and characterization of 21,243 full-length human cDNAs.</title>
        <authorList>
            <person name="Ota T."/>
            <person name="Suzuki Y."/>
            <person name="Nishikawa T."/>
            <person name="Otsuki T."/>
            <person name="Sugiyama T."/>
            <person name="Irie R."/>
            <person name="Wakamatsu A."/>
            <person name="Hayashi K."/>
            <person name="Sato H."/>
            <person name="Nagai K."/>
            <person name="Kimura K."/>
            <person name="Makita H."/>
            <person name="Sekine M."/>
            <person name="Obayashi M."/>
            <person name="Nishi T."/>
            <person name="Shibahara T."/>
            <person name="Tanaka T."/>
            <person name="Ishii S."/>
            <person name="Yamamoto J."/>
            <person name="Saito K."/>
            <person name="Kawai Y."/>
            <person name="Isono Y."/>
            <person name="Nakamura Y."/>
            <person name="Nagahari K."/>
            <person name="Murakami K."/>
            <person name="Yasuda T."/>
            <person name="Iwayanagi T."/>
            <person name="Wagatsuma M."/>
            <person name="Shiratori A."/>
            <person name="Sudo H."/>
            <person name="Hosoiri T."/>
            <person name="Kaku Y."/>
            <person name="Kodaira H."/>
            <person name="Kondo H."/>
            <person name="Sugawara M."/>
            <person name="Takahashi M."/>
            <person name="Kanda K."/>
            <person name="Yokoi T."/>
            <person name="Furuya T."/>
            <person name="Kikkawa E."/>
            <person name="Omura Y."/>
            <person name="Abe K."/>
            <person name="Kamihara K."/>
            <person name="Katsuta N."/>
            <person name="Sato K."/>
            <person name="Tanikawa M."/>
            <person name="Yamazaki M."/>
            <person name="Ninomiya K."/>
            <person name="Ishibashi T."/>
            <person name="Yamashita H."/>
            <person name="Murakawa K."/>
            <person name="Fujimori K."/>
            <person name="Tanai H."/>
            <person name="Kimata M."/>
            <person name="Watanabe M."/>
            <person name="Hiraoka S."/>
            <person name="Chiba Y."/>
            <person name="Ishida S."/>
            <person name="Ono Y."/>
            <person name="Takiguchi S."/>
            <person name="Watanabe S."/>
            <person name="Yosida M."/>
            <person name="Hotuta T."/>
            <person name="Kusano J."/>
            <person name="Kanehori K."/>
            <person name="Takahashi-Fujii A."/>
            <person name="Hara H."/>
            <person name="Tanase T.-O."/>
            <person name="Nomura Y."/>
            <person name="Togiya S."/>
            <person name="Komai F."/>
            <person name="Hara R."/>
            <person name="Takeuchi K."/>
            <person name="Arita M."/>
            <person name="Imose N."/>
            <person name="Musashino K."/>
            <person name="Yuuki H."/>
            <person name="Oshima A."/>
            <person name="Sasaki N."/>
            <person name="Aotsuka S."/>
            <person name="Yoshikawa Y."/>
            <person name="Matsunawa H."/>
            <person name="Ichihara T."/>
            <person name="Shiohata N."/>
            <person name="Sano S."/>
            <person name="Moriya S."/>
            <person name="Momiyama H."/>
            <person name="Satoh N."/>
            <person name="Takami S."/>
            <person name="Terashima Y."/>
            <person name="Suzuki O."/>
            <person name="Nakagawa S."/>
            <person name="Senoh A."/>
            <person name="Mizoguchi H."/>
            <person name="Goto Y."/>
            <person name="Shimizu F."/>
            <person name="Wakebe H."/>
            <person name="Hishigaki H."/>
            <person name="Watanabe T."/>
            <person name="Sugiyama A."/>
            <person name="Takemoto M."/>
            <person name="Kawakami B."/>
            <person name="Yamazaki M."/>
            <person name="Watanabe K."/>
            <person name="Kumagai A."/>
            <person name="Itakura S."/>
            <person name="Fukuzumi Y."/>
            <person name="Fujimori Y."/>
            <person name="Komiyama M."/>
            <person name="Tashiro H."/>
            <person name="Tanigami A."/>
            <person name="Fujiwara T."/>
            <person name="Ono T."/>
            <person name="Yamada K."/>
            <person name="Fujii Y."/>
            <person name="Ozaki K."/>
            <person name="Hirao M."/>
            <person name="Ohmori Y."/>
            <person name="Kawabata A."/>
            <person name="Hikiji T."/>
            <person name="Kobatake N."/>
            <person name="Inagaki H."/>
            <person name="Ikema Y."/>
            <person name="Okamoto S."/>
            <person name="Okitani R."/>
            <person name="Kawakami T."/>
            <person name="Noguchi S."/>
            <person name="Itoh T."/>
            <person name="Shigeta K."/>
            <person name="Senba T."/>
            <person name="Matsumura K."/>
            <person name="Nakajima Y."/>
            <person name="Mizuno T."/>
            <person name="Morinaga M."/>
            <person name="Sasaki M."/>
            <person name="Togashi T."/>
            <person name="Oyama M."/>
            <person name="Hata H."/>
            <person name="Watanabe M."/>
            <person name="Komatsu T."/>
            <person name="Mizushima-Sugano J."/>
            <person name="Satoh T."/>
            <person name="Shirai Y."/>
            <person name="Takahashi Y."/>
            <person name="Nakagawa K."/>
            <person name="Okumura K."/>
            <person name="Nagase T."/>
            <person name="Nomura N."/>
            <person name="Kikuchi H."/>
            <person name="Masuho Y."/>
            <person name="Yamashita R."/>
            <person name="Nakai K."/>
            <person name="Yada T."/>
            <person name="Nakamura Y."/>
            <person name="Ohara O."/>
            <person name="Isogai T."/>
            <person name="Sugano S."/>
        </authorList>
    </citation>
    <scope>NUCLEOTIDE SEQUENCE [LARGE SCALE MRNA] OF 1645-2320 (ISOFORM B)</scope>
    <scope>VARIANT PRO-1699</scope>
    <source>
        <tissue>Placenta</tissue>
    </source>
</reference>
<reference key="8">
    <citation type="journal article" date="2008" name="Proc. Natl. Acad. Sci. U.S.A.">
        <title>A quantitative atlas of mitotic phosphorylation.</title>
        <authorList>
            <person name="Dephoure N."/>
            <person name="Zhou C."/>
            <person name="Villen J."/>
            <person name="Beausoleil S.A."/>
            <person name="Bakalarski C.E."/>
            <person name="Elledge S.J."/>
            <person name="Gygi S.P."/>
        </authorList>
    </citation>
    <scope>PHOSPHORYLATION [LARGE SCALE ANALYSIS] AT SER-1289; SER-1605; SER-1607; SER-1904; SER-1905; SER-1907; SER-1910; SER-2018 AND SER-2020</scope>
    <scope>IDENTIFICATION BY MASS SPECTROMETRY [LARGE SCALE ANALYSIS]</scope>
    <source>
        <tissue>Cervix carcinoma</tissue>
    </source>
</reference>
<reference key="9">
    <citation type="journal article" date="2009" name="Sci. Signal.">
        <title>Quantitative phosphoproteomic analysis of T cell receptor signaling reveals system-wide modulation of protein-protein interactions.</title>
        <authorList>
            <person name="Mayya V."/>
            <person name="Lundgren D.H."/>
            <person name="Hwang S.-I."/>
            <person name="Rezaul K."/>
            <person name="Wu L."/>
            <person name="Eng J.K."/>
            <person name="Rodionov V."/>
            <person name="Han D.K."/>
        </authorList>
    </citation>
    <scope>PHOSPHORYLATION [LARGE SCALE ANALYSIS] AT SER-1475; SER-1605; SER-1607; SER-2018 AND SER-2020</scope>
    <scope>IDENTIFICATION BY MASS SPECTROMETRY [LARGE SCALE ANALYSIS]</scope>
    <source>
        <tissue>Leukemic T-cell</tissue>
    </source>
</reference>
<reference key="10">
    <citation type="journal article" date="2010" name="Sci. Signal.">
        <title>Quantitative phosphoproteomics reveals widespread full phosphorylation site occupancy during mitosis.</title>
        <authorList>
            <person name="Olsen J.V."/>
            <person name="Vermeulen M."/>
            <person name="Santamaria A."/>
            <person name="Kumar C."/>
            <person name="Miller M.L."/>
            <person name="Jensen L.J."/>
            <person name="Gnad F."/>
            <person name="Cox J."/>
            <person name="Jensen T.S."/>
            <person name="Nigg E.A."/>
            <person name="Brunak S."/>
            <person name="Mann M."/>
        </authorList>
    </citation>
    <scope>PHOSPHORYLATION [LARGE SCALE ANALYSIS] AT SER-696; SER-710; THR-1477; SER-1479; SER-1605; SER-1607; SER-1686; SER-2018 AND SER-2020</scope>
    <scope>PHOSPHORYLATION [LARGE SCALE ANALYSIS] AT SER-2214 (ISOFORM B)</scope>
    <scope>IDENTIFICATION BY MASS SPECTROMETRY [LARGE SCALE ANALYSIS]</scope>
    <source>
        <tissue>Cervix carcinoma</tissue>
    </source>
</reference>
<reference key="11">
    <citation type="journal article" date="2011" name="BMC Biol.">
        <title>Identification and characterization of a set of conserved and new regulators of cytoskeletal organisation, cell morphology and migration.</title>
        <authorList>
            <person name="Bai S.W."/>
            <person name="Herrera-Abreu M.T."/>
            <person name="Rohn J.L."/>
            <person name="Racine V."/>
            <person name="Tajadura V."/>
            <person name="Suryavanshi N."/>
            <person name="Bechtel S."/>
            <person name="Wiemann S."/>
            <person name="Baum B."/>
            <person name="Ridley A.J."/>
        </authorList>
    </citation>
    <scope>FUNCTION</scope>
</reference>
<reference key="12">
    <citation type="journal article" date="2011" name="Sci. Signal.">
        <title>System-wide temporal characterization of the proteome and phosphoproteome of human embryonic stem cell differentiation.</title>
        <authorList>
            <person name="Rigbolt K.T."/>
            <person name="Prokhorova T.A."/>
            <person name="Akimov V."/>
            <person name="Henningsen J."/>
            <person name="Johansen P.T."/>
            <person name="Kratchmarova I."/>
            <person name="Kassem M."/>
            <person name="Mann M."/>
            <person name="Olsen J.V."/>
            <person name="Blagoev B."/>
        </authorList>
    </citation>
    <scope>PHOSPHORYLATION [LARGE SCALE ANALYSIS] AT SER-696; SER-701; THR-1477; SER-1678; SER-1683; SER-1686; SER-2018 AND SER-2020</scope>
    <scope>IDENTIFICATION BY MASS SPECTROMETRY [LARGE SCALE ANALYSIS]</scope>
</reference>
<reference key="13">
    <citation type="journal article" date="2013" name="J. Proteome Res.">
        <title>Toward a comprehensive characterization of a human cancer cell phosphoproteome.</title>
        <authorList>
            <person name="Zhou H."/>
            <person name="Di Palma S."/>
            <person name="Preisinger C."/>
            <person name="Peng M."/>
            <person name="Polat A.N."/>
            <person name="Heck A.J."/>
            <person name="Mohammed S."/>
        </authorList>
    </citation>
    <scope>PHOSPHORYLATION [LARGE SCALE ANALYSIS] AT SER-696; SER-1475 AND SER-1943</scope>
    <scope>IDENTIFICATION BY MASS SPECTROMETRY [LARGE SCALE ANALYSIS]</scope>
    <source>
        <tissue>Cervix carcinoma</tissue>
        <tissue>Erythroleukemia</tissue>
    </source>
</reference>
<reference key="14">
    <citation type="journal article" date="2015" name="Genes Dev.">
        <title>Screen identifies bromodomain protein ZMYND8 in chromatin recognition of transcription-associated DNA damage that promotes homologous recombination.</title>
        <authorList>
            <person name="Gong F."/>
            <person name="Chiu L.Y."/>
            <person name="Cox B."/>
            <person name="Aymard F."/>
            <person name="Clouaire T."/>
            <person name="Leung J.W."/>
            <person name="Cammarata M."/>
            <person name="Perez M."/>
            <person name="Agarwal P."/>
            <person name="Brodbelt J.S."/>
            <person name="Legube G."/>
            <person name="Miller K.M."/>
        </authorList>
    </citation>
    <scope>SUBCELLULAR LOCATION</scope>
</reference>
<reference key="15">
    <citation type="journal article" date="2021" name="Hum. Genet.">
        <title>Bi-allelic BRWD1 variants cause male infertility with asthenoteratozoospermia and likely primary ciliary dyskinesia.</title>
        <authorList>
            <person name="Guo T."/>
            <person name="Tu C.F."/>
            <person name="Yang D.H."/>
            <person name="Ding S.Z."/>
            <person name="Lei C."/>
            <person name="Wang R.C."/>
            <person name="Liu L."/>
            <person name="Kang X."/>
            <person name="Shen X.Q."/>
            <person name="Yang Y.F."/>
            <person name="Tan Z.P."/>
            <person name="Tan Y.Q."/>
            <person name="Luo H."/>
        </authorList>
    </citation>
    <scope>INVOLVEMENT IN CILD51</scope>
    <scope>VARIANTS CILD51 SER-56; TYR-175; SER-339 AND LEU-1858</scope>
    <scope>CHARACTERIZATION OF VARIANTS CILD51 TYR-175 AND LEU-1858</scope>
    <scope>SUBCELLULAR LOCATION</scope>
    <scope>TISSUE SPECIFICITY</scope>
</reference>
<reference key="16">
    <citation type="journal article" date="2012" name="Cell">
        <title>Histone recognition and large-scale structural analysis of the human bromodomain family.</title>
        <authorList>
            <person name="Filippakopoulos P."/>
            <person name="Picaud S."/>
            <person name="Mangos M."/>
            <person name="Keates T."/>
            <person name="Lambert J.P."/>
            <person name="Barsyte-Lovejoy D."/>
            <person name="Felletar I."/>
            <person name="Volkmer R."/>
            <person name="Muller S."/>
            <person name="Pawson T."/>
            <person name="Gingras A.C."/>
            <person name="Arrowsmith C.H."/>
            <person name="Knapp S."/>
        </authorList>
    </citation>
    <scope>X-RAY CRYSTALLOGRAPHY (1.74 ANGSTROMS) OF 1310-1430</scope>
</reference>
<proteinExistence type="evidence at protein level"/>
<keyword id="KW-0002">3D-structure</keyword>
<keyword id="KW-0010">Activator</keyword>
<keyword id="KW-0025">Alternative splicing</keyword>
<keyword id="KW-0103">Bromodomain</keyword>
<keyword id="KW-1003">Cell membrane</keyword>
<keyword id="KW-0966">Cell projection</keyword>
<keyword id="KW-1186">Ciliopathy</keyword>
<keyword id="KW-0969">Cilium</keyword>
<keyword id="KW-0963">Cytoplasm</keyword>
<keyword id="KW-0206">Cytoskeleton</keyword>
<keyword id="KW-0282">Flagellum</keyword>
<keyword id="KW-0472">Membrane</keyword>
<keyword id="KW-0539">Nucleus</keyword>
<keyword id="KW-0597">Phosphoprotein</keyword>
<keyword id="KW-0990">Primary ciliary dyskinesia</keyword>
<keyword id="KW-1267">Proteomics identification</keyword>
<keyword id="KW-1185">Reference proteome</keyword>
<keyword id="KW-0677">Repeat</keyword>
<keyword id="KW-0804">Transcription</keyword>
<keyword id="KW-0805">Transcription regulation</keyword>
<keyword id="KW-0853">WD repeat</keyword>
<protein>
    <recommendedName>
        <fullName>Bromodomain and WD repeat-containing protein 1</fullName>
    </recommendedName>
    <alternativeName>
        <fullName>WD repeat-containing protein 9</fullName>
    </alternativeName>
</protein>
<gene>
    <name type="primary">BRWD1</name>
    <name type="synonym">C21orf107</name>
    <name type="synonym">WDR9</name>
</gene>
<dbReference type="EMBL" id="AJ238214">
    <property type="protein sequence ID" value="CAC37033.2"/>
    <property type="molecule type" value="mRNA"/>
</dbReference>
<dbReference type="EMBL" id="AJ292465">
    <property type="protein sequence ID" value="CAC44371.1"/>
    <property type="molecule type" value="mRNA"/>
</dbReference>
<dbReference type="EMBL" id="AJ292466">
    <property type="protein sequence ID" value="CAC44372.1"/>
    <property type="molecule type" value="mRNA"/>
</dbReference>
<dbReference type="EMBL" id="AB080586">
    <property type="protein sequence ID" value="BAD74071.1"/>
    <property type="molecule type" value="mRNA"/>
</dbReference>
<dbReference type="EMBL" id="AB080587">
    <property type="protein sequence ID" value="BAD74072.1"/>
    <property type="molecule type" value="mRNA"/>
</dbReference>
<dbReference type="EMBL" id="AF064861">
    <property type="status" value="NOT_ANNOTATED_CDS"/>
    <property type="molecule type" value="Genomic_DNA"/>
</dbReference>
<dbReference type="EMBL" id="AF129408">
    <property type="status" value="NOT_ANNOTATED_CDS"/>
    <property type="molecule type" value="Genomic_DNA"/>
</dbReference>
<dbReference type="EMBL" id="BC064602">
    <property type="protein sequence ID" value="AAH64602.1"/>
    <property type="molecule type" value="mRNA"/>
</dbReference>
<dbReference type="EMBL" id="AL163279">
    <property type="protein sequence ID" value="CAB90452.1"/>
    <property type="molecule type" value="Genomic_DNA"/>
</dbReference>
<dbReference type="EMBL" id="AJ222636">
    <property type="protein sequence ID" value="CAA10896.1"/>
    <property type="status" value="ALT_FRAME"/>
    <property type="molecule type" value="mRNA"/>
</dbReference>
<dbReference type="EMBL" id="AK002177">
    <property type="status" value="NOT_ANNOTATED_CDS"/>
    <property type="molecule type" value="mRNA"/>
</dbReference>
<dbReference type="CCDS" id="CCDS13662.1">
    <molecule id="Q9NSI6-1"/>
</dbReference>
<dbReference type="CCDS" id="CCDS13663.1">
    <molecule id="Q9NSI6-2"/>
</dbReference>
<dbReference type="CCDS" id="CCDS33557.1">
    <molecule id="Q9NSI6-4"/>
</dbReference>
<dbReference type="RefSeq" id="NP_001007247.1">
    <molecule id="Q9NSI6-4"/>
    <property type="nucleotide sequence ID" value="NM_001007246.3"/>
</dbReference>
<dbReference type="RefSeq" id="NP_061836.2">
    <molecule id="Q9NSI6-1"/>
    <property type="nucleotide sequence ID" value="NM_018963.4"/>
</dbReference>
<dbReference type="RefSeq" id="NP_387505.1">
    <molecule id="Q9NSI6-2"/>
    <property type="nucleotide sequence ID" value="NM_033656.4"/>
</dbReference>
<dbReference type="PDB" id="3Q2E">
    <property type="method" value="X-ray"/>
    <property type="resolution" value="1.74 A"/>
    <property type="chains" value="A=1310-1430"/>
</dbReference>
<dbReference type="PDBsum" id="3Q2E"/>
<dbReference type="SMR" id="Q9NSI6"/>
<dbReference type="BioGRID" id="119828">
    <property type="interactions" value="56"/>
</dbReference>
<dbReference type="FunCoup" id="Q9NSI6">
    <property type="interactions" value="4777"/>
</dbReference>
<dbReference type="IntAct" id="Q9NSI6">
    <property type="interactions" value="54"/>
</dbReference>
<dbReference type="STRING" id="9606.ENSP00000330753"/>
<dbReference type="BindingDB" id="Q9NSI6"/>
<dbReference type="ChEMBL" id="CHEMBL3351192"/>
<dbReference type="GlyGen" id="Q9NSI6">
    <property type="glycosylation" value="3 sites, 1 O-linked glycan (3 sites)"/>
</dbReference>
<dbReference type="iPTMnet" id="Q9NSI6"/>
<dbReference type="PhosphoSitePlus" id="Q9NSI6"/>
<dbReference type="SwissPalm" id="Q9NSI6"/>
<dbReference type="BioMuta" id="BRWD1"/>
<dbReference type="DMDM" id="313104296"/>
<dbReference type="jPOST" id="Q9NSI6"/>
<dbReference type="MassIVE" id="Q9NSI6"/>
<dbReference type="PaxDb" id="9606-ENSP00000330753"/>
<dbReference type="PeptideAtlas" id="Q9NSI6"/>
<dbReference type="ProteomicsDB" id="66890"/>
<dbReference type="ProteomicsDB" id="82555">
    <molecule id="Q9NSI6-1"/>
</dbReference>
<dbReference type="ProteomicsDB" id="82556">
    <molecule id="Q9NSI6-2"/>
</dbReference>
<dbReference type="ProteomicsDB" id="82557">
    <molecule id="Q9NSI6-3"/>
</dbReference>
<dbReference type="Pumba" id="Q9NSI6"/>
<dbReference type="Antibodypedia" id="23299">
    <property type="antibodies" value="106 antibodies from 23 providers"/>
</dbReference>
<dbReference type="DNASU" id="54014"/>
<dbReference type="Ensembl" id="ENST00000333229.6">
    <molecule id="Q9NSI6-1"/>
    <property type="protein sequence ID" value="ENSP00000330753.2"/>
    <property type="gene ID" value="ENSG00000185658.14"/>
</dbReference>
<dbReference type="Ensembl" id="ENST00000341322.4">
    <molecule id="Q9NSI6-4"/>
    <property type="protein sequence ID" value="ENSP00000342106.4"/>
    <property type="gene ID" value="ENSG00000185658.14"/>
</dbReference>
<dbReference type="Ensembl" id="ENST00000342449.8">
    <molecule id="Q9NSI6-2"/>
    <property type="protein sequence ID" value="ENSP00000344333.3"/>
    <property type="gene ID" value="ENSG00000185658.14"/>
</dbReference>
<dbReference type="Ensembl" id="ENST00000380800.7">
    <molecule id="Q9NSI6-3"/>
    <property type="protein sequence ID" value="ENSP00000370178.3"/>
    <property type="gene ID" value="ENSG00000185658.14"/>
</dbReference>
<dbReference type="GeneID" id="54014"/>
<dbReference type="KEGG" id="hsa:54014"/>
<dbReference type="MANE-Select" id="ENST00000342449.8">
    <molecule id="Q9NSI6-2"/>
    <property type="protein sequence ID" value="ENSP00000344333.3"/>
    <property type="RefSeq nucleotide sequence ID" value="NM_033656.4"/>
    <property type="RefSeq protein sequence ID" value="NP_387505.1"/>
</dbReference>
<dbReference type="UCSC" id="uc002yxk.3">
    <molecule id="Q9NSI6-1"/>
    <property type="organism name" value="human"/>
</dbReference>
<dbReference type="AGR" id="HGNC:12760"/>
<dbReference type="CTD" id="54014"/>
<dbReference type="DisGeNET" id="54014"/>
<dbReference type="GeneCards" id="BRWD1"/>
<dbReference type="HGNC" id="HGNC:12760">
    <property type="gene designation" value="BRWD1"/>
</dbReference>
<dbReference type="HPA" id="ENSG00000185658">
    <property type="expression patterns" value="Low tissue specificity"/>
</dbReference>
<dbReference type="MalaCards" id="BRWD1"/>
<dbReference type="MIM" id="617824">
    <property type="type" value="gene"/>
</dbReference>
<dbReference type="MIM" id="620438">
    <property type="type" value="phenotype"/>
</dbReference>
<dbReference type="neXtProt" id="NX_Q9NSI6"/>
<dbReference type="OpenTargets" id="ENSG00000185658"/>
<dbReference type="PharmGKB" id="PA134906879"/>
<dbReference type="VEuPathDB" id="HostDB:ENSG00000185658"/>
<dbReference type="eggNOG" id="KOG0644">
    <property type="taxonomic scope" value="Eukaryota"/>
</dbReference>
<dbReference type="GeneTree" id="ENSGT00950000183107"/>
<dbReference type="HOGENOM" id="CLU_001108_0_1_1"/>
<dbReference type="InParanoid" id="Q9NSI6"/>
<dbReference type="OMA" id="QDCTHIS"/>
<dbReference type="OrthoDB" id="10265743at2759"/>
<dbReference type="PAN-GO" id="Q9NSI6">
    <property type="GO annotations" value="4 GO annotations based on evolutionary models"/>
</dbReference>
<dbReference type="PhylomeDB" id="Q9NSI6"/>
<dbReference type="TreeFam" id="TF324197"/>
<dbReference type="PathwayCommons" id="Q9NSI6"/>
<dbReference type="Reactome" id="R-HSA-1266695">
    <property type="pathway name" value="Interleukin-7 signaling"/>
</dbReference>
<dbReference type="Reactome" id="R-HSA-3247509">
    <property type="pathway name" value="Chromatin modifying enzymes"/>
</dbReference>
<dbReference type="SignaLink" id="Q9NSI6"/>
<dbReference type="BioGRID-ORCS" id="54014">
    <property type="hits" value="35 hits in 1214 CRISPR screens"/>
</dbReference>
<dbReference type="ChiTaRS" id="BRWD1">
    <property type="organism name" value="human"/>
</dbReference>
<dbReference type="EvolutionaryTrace" id="Q9NSI6"/>
<dbReference type="GeneWiki" id="BRWD1"/>
<dbReference type="GenomeRNAi" id="54014"/>
<dbReference type="Pharos" id="Q9NSI6">
    <property type="development level" value="Tbio"/>
</dbReference>
<dbReference type="PRO" id="PR:Q9NSI6"/>
<dbReference type="Proteomes" id="UP000005640">
    <property type="component" value="Chromosome 21"/>
</dbReference>
<dbReference type="RNAct" id="Q9NSI6">
    <property type="molecule type" value="protein"/>
</dbReference>
<dbReference type="Bgee" id="ENSG00000185658">
    <property type="expression patterns" value="Expressed in cortical plate and 177 other cell types or tissues"/>
</dbReference>
<dbReference type="ExpressionAtlas" id="Q9NSI6">
    <property type="expression patterns" value="baseline and differential"/>
</dbReference>
<dbReference type="GO" id="GO:0005930">
    <property type="term" value="C:axoneme"/>
    <property type="evidence" value="ECO:0000315"/>
    <property type="project" value="UniProtKB"/>
</dbReference>
<dbReference type="GO" id="GO:0060170">
    <property type="term" value="C:ciliary membrane"/>
    <property type="evidence" value="ECO:0007669"/>
    <property type="project" value="UniProtKB-SubCell"/>
</dbReference>
<dbReference type="GO" id="GO:0005829">
    <property type="term" value="C:cytosol"/>
    <property type="evidence" value="ECO:0000314"/>
    <property type="project" value="HPA"/>
</dbReference>
<dbReference type="GO" id="GO:0031514">
    <property type="term" value="C:motile cilium"/>
    <property type="evidence" value="ECO:0000315"/>
    <property type="project" value="UniProtKB"/>
</dbReference>
<dbReference type="GO" id="GO:0005730">
    <property type="term" value="C:nucleolus"/>
    <property type="evidence" value="ECO:0000314"/>
    <property type="project" value="HPA"/>
</dbReference>
<dbReference type="GO" id="GO:0005654">
    <property type="term" value="C:nucleoplasm"/>
    <property type="evidence" value="ECO:0000304"/>
    <property type="project" value="Reactome"/>
</dbReference>
<dbReference type="GO" id="GO:0005634">
    <property type="term" value="C:nucleus"/>
    <property type="evidence" value="ECO:0000314"/>
    <property type="project" value="UniProtKB"/>
</dbReference>
<dbReference type="GO" id="GO:0007010">
    <property type="term" value="P:cytoskeleton organization"/>
    <property type="evidence" value="ECO:0000315"/>
    <property type="project" value="UniProtKB"/>
</dbReference>
<dbReference type="GO" id="GO:0008360">
    <property type="term" value="P:regulation of cell shape"/>
    <property type="evidence" value="ECO:0000315"/>
    <property type="project" value="UniProtKB"/>
</dbReference>
<dbReference type="GO" id="GO:0006357">
    <property type="term" value="P:regulation of transcription by RNA polymerase II"/>
    <property type="evidence" value="ECO:0000318"/>
    <property type="project" value="GO_Central"/>
</dbReference>
<dbReference type="CDD" id="cd05529">
    <property type="entry name" value="Bromo_WDR9_I_like"/>
    <property type="match status" value="1"/>
</dbReference>
<dbReference type="CDD" id="cd05496">
    <property type="entry name" value="Bromo_WDR9_II"/>
    <property type="match status" value="1"/>
</dbReference>
<dbReference type="CDD" id="cd00200">
    <property type="entry name" value="WD40"/>
    <property type="match status" value="1"/>
</dbReference>
<dbReference type="FunFam" id="1.20.920.10:FF:000017">
    <property type="entry name" value="Bromodomain and WD repeat domain containing 1"/>
    <property type="match status" value="1"/>
</dbReference>
<dbReference type="FunFam" id="2.130.10.10:FF:000023">
    <property type="entry name" value="Bromodomain and WD repeat domain containing 1"/>
    <property type="match status" value="1"/>
</dbReference>
<dbReference type="FunFam" id="2.130.10.10:FF:000071">
    <property type="entry name" value="Bromodomain and WD repeat domain containing 1"/>
    <property type="match status" value="1"/>
</dbReference>
<dbReference type="FunFam" id="2.30.30.1040:FF:000003">
    <property type="entry name" value="Bromodomain and WD repeat domain containing 1"/>
    <property type="match status" value="1"/>
</dbReference>
<dbReference type="FunFam" id="1.20.920.10:FF:000008">
    <property type="entry name" value="Bromodomain and WD repeat domain containing 3"/>
    <property type="match status" value="1"/>
</dbReference>
<dbReference type="Gene3D" id="2.30.30.1040">
    <property type="match status" value="1"/>
</dbReference>
<dbReference type="Gene3D" id="1.20.920.10">
    <property type="entry name" value="Bromodomain-like"/>
    <property type="match status" value="2"/>
</dbReference>
<dbReference type="Gene3D" id="2.130.10.10">
    <property type="entry name" value="YVTN repeat-like/Quinoprotein amine dehydrogenase"/>
    <property type="match status" value="2"/>
</dbReference>
<dbReference type="InterPro" id="IPR052060">
    <property type="entry name" value="Bromo_WD_repeat"/>
</dbReference>
<dbReference type="InterPro" id="IPR001487">
    <property type="entry name" value="Bromodomain"/>
</dbReference>
<dbReference type="InterPro" id="IPR036427">
    <property type="entry name" value="Bromodomain-like_sf"/>
</dbReference>
<dbReference type="InterPro" id="IPR018359">
    <property type="entry name" value="Bromodomain_CS"/>
</dbReference>
<dbReference type="InterPro" id="IPR015943">
    <property type="entry name" value="WD40/YVTN_repeat-like_dom_sf"/>
</dbReference>
<dbReference type="InterPro" id="IPR019775">
    <property type="entry name" value="WD40_repeat_CS"/>
</dbReference>
<dbReference type="InterPro" id="IPR036322">
    <property type="entry name" value="WD40_repeat_dom_sf"/>
</dbReference>
<dbReference type="InterPro" id="IPR001680">
    <property type="entry name" value="WD40_rpt"/>
</dbReference>
<dbReference type="PANTHER" id="PTHR16266:SF26">
    <property type="entry name" value="BROMODOMAIN AND WD REPEAT-CONTAINING PROTEIN 1"/>
    <property type="match status" value="1"/>
</dbReference>
<dbReference type="PANTHER" id="PTHR16266">
    <property type="entry name" value="WD REPEAT DOMAIN 9"/>
    <property type="match status" value="1"/>
</dbReference>
<dbReference type="Pfam" id="PF00439">
    <property type="entry name" value="Bromodomain"/>
    <property type="match status" value="2"/>
</dbReference>
<dbReference type="Pfam" id="PF25437">
    <property type="entry name" value="BRWD1_N"/>
    <property type="match status" value="1"/>
</dbReference>
<dbReference type="Pfam" id="PF25313">
    <property type="entry name" value="BRWD_AD"/>
    <property type="match status" value="1"/>
</dbReference>
<dbReference type="Pfam" id="PF00400">
    <property type="entry name" value="WD40"/>
    <property type="match status" value="5"/>
</dbReference>
<dbReference type="PRINTS" id="PR00503">
    <property type="entry name" value="BROMODOMAIN"/>
</dbReference>
<dbReference type="SMART" id="SM00297">
    <property type="entry name" value="BROMO"/>
    <property type="match status" value="2"/>
</dbReference>
<dbReference type="SMART" id="SM00320">
    <property type="entry name" value="WD40"/>
    <property type="match status" value="8"/>
</dbReference>
<dbReference type="SUPFAM" id="SSF47370">
    <property type="entry name" value="Bromodomain"/>
    <property type="match status" value="2"/>
</dbReference>
<dbReference type="SUPFAM" id="SSF50978">
    <property type="entry name" value="WD40 repeat-like"/>
    <property type="match status" value="1"/>
</dbReference>
<dbReference type="PROSITE" id="PS00633">
    <property type="entry name" value="BROMODOMAIN_1"/>
    <property type="match status" value="1"/>
</dbReference>
<dbReference type="PROSITE" id="PS50014">
    <property type="entry name" value="BROMODOMAIN_2"/>
    <property type="match status" value="2"/>
</dbReference>
<dbReference type="PROSITE" id="PS00678">
    <property type="entry name" value="WD_REPEATS_1"/>
    <property type="match status" value="2"/>
</dbReference>
<dbReference type="PROSITE" id="PS50082">
    <property type="entry name" value="WD_REPEATS_2"/>
    <property type="match status" value="6"/>
</dbReference>
<dbReference type="PROSITE" id="PS50294">
    <property type="entry name" value="WD_REPEATS_REGION"/>
    <property type="match status" value="1"/>
</dbReference>